<comment type="function">
    <text evidence="1">With S4 and S12 plays an important role in translational accuracy.</text>
</comment>
<comment type="function">
    <text evidence="1">Located at the back of the 30S subunit body where it stabilizes the conformation of the head with respect to the body.</text>
</comment>
<comment type="subunit">
    <text evidence="1">Part of the 30S ribosomal subunit. Contacts proteins S4 and S8.</text>
</comment>
<comment type="domain">
    <text>The N-terminal domain interacts with the head of the 30S subunit; the C-terminal domain interacts with the body and contacts protein S4. The interaction surface between S4 and S5 is involved in control of translational fidelity.</text>
</comment>
<comment type="similarity">
    <text evidence="1">Belongs to the universal ribosomal protein uS5 family.</text>
</comment>
<keyword id="KW-1185">Reference proteome</keyword>
<keyword id="KW-0687">Ribonucleoprotein</keyword>
<keyword id="KW-0689">Ribosomal protein</keyword>
<keyword id="KW-0694">RNA-binding</keyword>
<keyword id="KW-0699">rRNA-binding</keyword>
<gene>
    <name evidence="1" type="primary">rpsE</name>
    <name type="ordered locus">Swol_2316</name>
</gene>
<reference key="1">
    <citation type="journal article" date="2010" name="Environ. Microbiol.">
        <title>The genome of Syntrophomonas wolfei: new insights into syntrophic metabolism and biohydrogen production.</title>
        <authorList>
            <person name="Sieber J.R."/>
            <person name="Sims D.R."/>
            <person name="Han C."/>
            <person name="Kim E."/>
            <person name="Lykidis A."/>
            <person name="Lapidus A.L."/>
            <person name="McDonnald E."/>
            <person name="Rohlin L."/>
            <person name="Culley D.E."/>
            <person name="Gunsalus R."/>
            <person name="McInerney M.J."/>
        </authorList>
    </citation>
    <scope>NUCLEOTIDE SEQUENCE [LARGE SCALE GENOMIC DNA]</scope>
    <source>
        <strain>DSM 2245B / Goettingen</strain>
    </source>
</reference>
<evidence type="ECO:0000255" key="1">
    <source>
        <dbReference type="HAMAP-Rule" id="MF_01307"/>
    </source>
</evidence>
<evidence type="ECO:0000305" key="2"/>
<sequence length="167" mass="17648">MIDKEQAAPEMIEKVVTIRRVAKVVKGGRRFSFSALVVVGDGEGKVGTGKGKATEVPEAIRKAIENAKKNMLSVPLIDGRTIPHEILGIFGAGQVLLKPASEGTGVIAGGPVRAVLEAAGIKDILTKSLGSDNATNIVHATMEGLRSLKRVEDVARQRGKTIDEIMN</sequence>
<dbReference type="EMBL" id="CP000448">
    <property type="protein sequence ID" value="ABI69607.1"/>
    <property type="molecule type" value="Genomic_DNA"/>
</dbReference>
<dbReference type="SMR" id="Q0AUJ7"/>
<dbReference type="STRING" id="335541.Swol_2316"/>
<dbReference type="KEGG" id="swo:Swol_2316"/>
<dbReference type="eggNOG" id="COG0098">
    <property type="taxonomic scope" value="Bacteria"/>
</dbReference>
<dbReference type="HOGENOM" id="CLU_065898_2_2_9"/>
<dbReference type="OrthoDB" id="9809045at2"/>
<dbReference type="Proteomes" id="UP000001968">
    <property type="component" value="Chromosome"/>
</dbReference>
<dbReference type="GO" id="GO:0015935">
    <property type="term" value="C:small ribosomal subunit"/>
    <property type="evidence" value="ECO:0007669"/>
    <property type="project" value="InterPro"/>
</dbReference>
<dbReference type="GO" id="GO:0019843">
    <property type="term" value="F:rRNA binding"/>
    <property type="evidence" value="ECO:0007669"/>
    <property type="project" value="UniProtKB-UniRule"/>
</dbReference>
<dbReference type="GO" id="GO:0003735">
    <property type="term" value="F:structural constituent of ribosome"/>
    <property type="evidence" value="ECO:0007669"/>
    <property type="project" value="InterPro"/>
</dbReference>
<dbReference type="GO" id="GO:0006412">
    <property type="term" value="P:translation"/>
    <property type="evidence" value="ECO:0007669"/>
    <property type="project" value="UniProtKB-UniRule"/>
</dbReference>
<dbReference type="FunFam" id="3.30.160.20:FF:000001">
    <property type="entry name" value="30S ribosomal protein S5"/>
    <property type="match status" value="1"/>
</dbReference>
<dbReference type="FunFam" id="3.30.230.10:FF:000002">
    <property type="entry name" value="30S ribosomal protein S5"/>
    <property type="match status" value="1"/>
</dbReference>
<dbReference type="Gene3D" id="3.30.160.20">
    <property type="match status" value="1"/>
</dbReference>
<dbReference type="Gene3D" id="3.30.230.10">
    <property type="match status" value="1"/>
</dbReference>
<dbReference type="HAMAP" id="MF_01307_B">
    <property type="entry name" value="Ribosomal_uS5_B"/>
    <property type="match status" value="1"/>
</dbReference>
<dbReference type="InterPro" id="IPR020568">
    <property type="entry name" value="Ribosomal_Su5_D2-typ_SF"/>
</dbReference>
<dbReference type="InterPro" id="IPR000851">
    <property type="entry name" value="Ribosomal_uS5"/>
</dbReference>
<dbReference type="InterPro" id="IPR005712">
    <property type="entry name" value="Ribosomal_uS5_bac-type"/>
</dbReference>
<dbReference type="InterPro" id="IPR005324">
    <property type="entry name" value="Ribosomal_uS5_C"/>
</dbReference>
<dbReference type="InterPro" id="IPR013810">
    <property type="entry name" value="Ribosomal_uS5_N"/>
</dbReference>
<dbReference type="InterPro" id="IPR018192">
    <property type="entry name" value="Ribosomal_uS5_N_CS"/>
</dbReference>
<dbReference type="InterPro" id="IPR014721">
    <property type="entry name" value="Ribsml_uS5_D2-typ_fold_subgr"/>
</dbReference>
<dbReference type="NCBIfam" id="TIGR01021">
    <property type="entry name" value="rpsE_bact"/>
    <property type="match status" value="1"/>
</dbReference>
<dbReference type="PANTHER" id="PTHR48277">
    <property type="entry name" value="MITOCHONDRIAL RIBOSOMAL PROTEIN S5"/>
    <property type="match status" value="1"/>
</dbReference>
<dbReference type="PANTHER" id="PTHR48277:SF1">
    <property type="entry name" value="MITOCHONDRIAL RIBOSOMAL PROTEIN S5"/>
    <property type="match status" value="1"/>
</dbReference>
<dbReference type="Pfam" id="PF00333">
    <property type="entry name" value="Ribosomal_S5"/>
    <property type="match status" value="1"/>
</dbReference>
<dbReference type="Pfam" id="PF03719">
    <property type="entry name" value="Ribosomal_S5_C"/>
    <property type="match status" value="1"/>
</dbReference>
<dbReference type="SUPFAM" id="SSF54768">
    <property type="entry name" value="dsRNA-binding domain-like"/>
    <property type="match status" value="1"/>
</dbReference>
<dbReference type="SUPFAM" id="SSF54211">
    <property type="entry name" value="Ribosomal protein S5 domain 2-like"/>
    <property type="match status" value="1"/>
</dbReference>
<dbReference type="PROSITE" id="PS00585">
    <property type="entry name" value="RIBOSOMAL_S5"/>
    <property type="match status" value="1"/>
</dbReference>
<dbReference type="PROSITE" id="PS50881">
    <property type="entry name" value="S5_DSRBD"/>
    <property type="match status" value="1"/>
</dbReference>
<feature type="chain" id="PRO_0000323219" description="Small ribosomal subunit protein uS5">
    <location>
        <begin position="1"/>
        <end position="167"/>
    </location>
</feature>
<feature type="domain" description="S5 DRBM" evidence="1">
    <location>
        <begin position="11"/>
        <end position="74"/>
    </location>
</feature>
<proteinExistence type="inferred from homology"/>
<protein>
    <recommendedName>
        <fullName evidence="1">Small ribosomal subunit protein uS5</fullName>
    </recommendedName>
    <alternativeName>
        <fullName evidence="2">30S ribosomal protein S5</fullName>
    </alternativeName>
</protein>
<organism>
    <name type="scientific">Syntrophomonas wolfei subsp. wolfei (strain DSM 2245B / Goettingen)</name>
    <dbReference type="NCBI Taxonomy" id="335541"/>
    <lineage>
        <taxon>Bacteria</taxon>
        <taxon>Bacillati</taxon>
        <taxon>Bacillota</taxon>
        <taxon>Clostridia</taxon>
        <taxon>Eubacteriales</taxon>
        <taxon>Syntrophomonadaceae</taxon>
        <taxon>Syntrophomonas</taxon>
    </lineage>
</organism>
<name>RS5_SYNWW</name>
<accession>Q0AUJ7</accession>